<keyword id="KW-0028">Amino-acid biosynthesis</keyword>
<keyword id="KW-0368">Histidine biosynthesis</keyword>
<keyword id="KW-0378">Hydrolase</keyword>
<keyword id="KW-0486">Methionine biosynthesis</keyword>
<keyword id="KW-0511">Multifunctional enzyme</keyword>
<keyword id="KW-0521">NADP</keyword>
<keyword id="KW-0554">One-carbon metabolism</keyword>
<keyword id="KW-0560">Oxidoreductase</keyword>
<keyword id="KW-0658">Purine biosynthesis</keyword>
<comment type="function">
    <text evidence="1">Catalyzes the oxidation of 5,10-methylenetetrahydrofolate to 5,10-methenyltetrahydrofolate and then the hydrolysis of 5,10-methenyltetrahydrofolate to 10-formyltetrahydrofolate.</text>
</comment>
<comment type="catalytic activity">
    <reaction evidence="1">
        <text>(6R)-5,10-methylene-5,6,7,8-tetrahydrofolate + NADP(+) = (6R)-5,10-methenyltetrahydrofolate + NADPH</text>
        <dbReference type="Rhea" id="RHEA:22812"/>
        <dbReference type="ChEBI" id="CHEBI:15636"/>
        <dbReference type="ChEBI" id="CHEBI:57455"/>
        <dbReference type="ChEBI" id="CHEBI:57783"/>
        <dbReference type="ChEBI" id="CHEBI:58349"/>
        <dbReference type="EC" id="1.5.1.5"/>
    </reaction>
</comment>
<comment type="catalytic activity">
    <reaction evidence="1">
        <text>(6R)-5,10-methenyltetrahydrofolate + H2O = (6R)-10-formyltetrahydrofolate + H(+)</text>
        <dbReference type="Rhea" id="RHEA:23700"/>
        <dbReference type="ChEBI" id="CHEBI:15377"/>
        <dbReference type="ChEBI" id="CHEBI:15378"/>
        <dbReference type="ChEBI" id="CHEBI:57455"/>
        <dbReference type="ChEBI" id="CHEBI:195366"/>
        <dbReference type="EC" id="3.5.4.9"/>
    </reaction>
</comment>
<comment type="pathway">
    <text evidence="1">One-carbon metabolism; tetrahydrofolate interconversion.</text>
</comment>
<comment type="subunit">
    <text evidence="1">Homodimer.</text>
</comment>
<comment type="similarity">
    <text evidence="1">Belongs to the tetrahydrofolate dehydrogenase/cyclohydrolase family.</text>
</comment>
<comment type="sequence caution" evidence="2">
    <conflict type="erroneous initiation">
        <sequence resource="EMBL-CDS" id="AAR92231"/>
    </conflict>
</comment>
<sequence>MAPVGSIVLDGKATRDEIFVDLKQRVAKLTEAGRTPGLGTVLVGDDPGSQAYVRGKHADCAKVGINSIRRDLPADITQAQLDETIDELNANPDCTGYIVQLPLPKHLDENAALERIDPAKDADGLHPTNLGRLVLGKDAPLPCTPRGIVHLLRRFDVPIAGAHVVVIGRGVTVGRPMGLLLTRRSENATVTLCHTGTRDLPALTRQADIIIAAVGVPHMVTADMVKPGAAVVDVGVSRVDGKLTGDVAPDVWEVAGHVSPNPGGVGPLTRAFLLTNVVELEESKLA</sequence>
<gene>
    <name evidence="1" type="primary">folD</name>
</gene>
<evidence type="ECO:0000255" key="1">
    <source>
        <dbReference type="HAMAP-Rule" id="MF_01576"/>
    </source>
</evidence>
<evidence type="ECO:0000305" key="2"/>
<reference key="1">
    <citation type="journal article" date="2005" name="J. Antimicrob. Chemother.">
        <title>Molecular basis of intrinsic macrolide resistance in clinical isolates of Mycobacterium fortuitum.</title>
        <authorList>
            <person name="Nash K.A."/>
            <person name="Zhang Y."/>
            <person name="Brown-Elliott B.A."/>
            <person name="Wallace R.J. Jr."/>
        </authorList>
    </citation>
    <scope>NUCLEOTIDE SEQUENCE [GENOMIC DNA]</scope>
    <source>
        <strain>ATCC 6841 / DSM 46621 / CIP 104534 / JCM 6387 / KCTC 9510 / NBRC 13159 / NCTC 10394</strain>
    </source>
</reference>
<proteinExistence type="inferred from homology"/>
<accession>Q6RX33</accession>
<organism>
    <name type="scientific">Mycolicibacterium fortuitum</name>
    <name type="common">Mycobacterium fortuitum</name>
    <dbReference type="NCBI Taxonomy" id="1766"/>
    <lineage>
        <taxon>Bacteria</taxon>
        <taxon>Bacillati</taxon>
        <taxon>Actinomycetota</taxon>
        <taxon>Actinomycetes</taxon>
        <taxon>Mycobacteriales</taxon>
        <taxon>Mycobacteriaceae</taxon>
        <taxon>Mycolicibacterium</taxon>
    </lineage>
</organism>
<dbReference type="EC" id="1.5.1.5" evidence="1"/>
<dbReference type="EC" id="3.5.4.9" evidence="1"/>
<dbReference type="EMBL" id="AY487229">
    <property type="protein sequence ID" value="AAR92231.1"/>
    <property type="status" value="ALT_INIT"/>
    <property type="molecule type" value="Genomic_DNA"/>
</dbReference>
<dbReference type="SMR" id="Q6RX33"/>
<dbReference type="STRING" id="1766.XA26_17150"/>
<dbReference type="UniPathway" id="UPA00193"/>
<dbReference type="GO" id="GO:0005829">
    <property type="term" value="C:cytosol"/>
    <property type="evidence" value="ECO:0007669"/>
    <property type="project" value="TreeGrafter"/>
</dbReference>
<dbReference type="GO" id="GO:0004477">
    <property type="term" value="F:methenyltetrahydrofolate cyclohydrolase activity"/>
    <property type="evidence" value="ECO:0007669"/>
    <property type="project" value="UniProtKB-UniRule"/>
</dbReference>
<dbReference type="GO" id="GO:0004488">
    <property type="term" value="F:methylenetetrahydrofolate dehydrogenase (NADP+) activity"/>
    <property type="evidence" value="ECO:0007669"/>
    <property type="project" value="UniProtKB-UniRule"/>
</dbReference>
<dbReference type="GO" id="GO:0000105">
    <property type="term" value="P:L-histidine biosynthetic process"/>
    <property type="evidence" value="ECO:0007669"/>
    <property type="project" value="UniProtKB-KW"/>
</dbReference>
<dbReference type="GO" id="GO:0009086">
    <property type="term" value="P:methionine biosynthetic process"/>
    <property type="evidence" value="ECO:0007669"/>
    <property type="project" value="UniProtKB-KW"/>
</dbReference>
<dbReference type="GO" id="GO:0006164">
    <property type="term" value="P:purine nucleotide biosynthetic process"/>
    <property type="evidence" value="ECO:0007669"/>
    <property type="project" value="UniProtKB-KW"/>
</dbReference>
<dbReference type="GO" id="GO:0035999">
    <property type="term" value="P:tetrahydrofolate interconversion"/>
    <property type="evidence" value="ECO:0007669"/>
    <property type="project" value="UniProtKB-UniRule"/>
</dbReference>
<dbReference type="CDD" id="cd01080">
    <property type="entry name" value="NAD_bind_m-THF_DH_Cyclohyd"/>
    <property type="match status" value="1"/>
</dbReference>
<dbReference type="FunFam" id="3.40.50.720:FF:000094">
    <property type="entry name" value="Bifunctional protein FolD"/>
    <property type="match status" value="1"/>
</dbReference>
<dbReference type="FunFam" id="3.40.50.10860:FF:000005">
    <property type="entry name" value="C-1-tetrahydrofolate synthase, cytoplasmic, putative"/>
    <property type="match status" value="1"/>
</dbReference>
<dbReference type="Gene3D" id="3.40.50.10860">
    <property type="entry name" value="Leucine Dehydrogenase, chain A, domain 1"/>
    <property type="match status" value="1"/>
</dbReference>
<dbReference type="Gene3D" id="3.40.50.720">
    <property type="entry name" value="NAD(P)-binding Rossmann-like Domain"/>
    <property type="match status" value="1"/>
</dbReference>
<dbReference type="HAMAP" id="MF_01576">
    <property type="entry name" value="THF_DHG_CYH"/>
    <property type="match status" value="1"/>
</dbReference>
<dbReference type="InterPro" id="IPR046346">
    <property type="entry name" value="Aminoacid_DH-like_N_sf"/>
</dbReference>
<dbReference type="InterPro" id="IPR036291">
    <property type="entry name" value="NAD(P)-bd_dom_sf"/>
</dbReference>
<dbReference type="InterPro" id="IPR000672">
    <property type="entry name" value="THF_DH/CycHdrlase"/>
</dbReference>
<dbReference type="InterPro" id="IPR020630">
    <property type="entry name" value="THF_DH/CycHdrlase_cat_dom"/>
</dbReference>
<dbReference type="InterPro" id="IPR020631">
    <property type="entry name" value="THF_DH/CycHdrlase_NAD-bd_dom"/>
</dbReference>
<dbReference type="NCBIfam" id="NF010789">
    <property type="entry name" value="PRK14193.1"/>
    <property type="match status" value="1"/>
</dbReference>
<dbReference type="PANTHER" id="PTHR48099:SF5">
    <property type="entry name" value="C-1-TETRAHYDROFOLATE SYNTHASE, CYTOPLASMIC"/>
    <property type="match status" value="1"/>
</dbReference>
<dbReference type="PANTHER" id="PTHR48099">
    <property type="entry name" value="C-1-TETRAHYDROFOLATE SYNTHASE, CYTOPLASMIC-RELATED"/>
    <property type="match status" value="1"/>
</dbReference>
<dbReference type="Pfam" id="PF00763">
    <property type="entry name" value="THF_DHG_CYH"/>
    <property type="match status" value="1"/>
</dbReference>
<dbReference type="Pfam" id="PF02882">
    <property type="entry name" value="THF_DHG_CYH_C"/>
    <property type="match status" value="1"/>
</dbReference>
<dbReference type="PRINTS" id="PR00085">
    <property type="entry name" value="THFDHDRGNASE"/>
</dbReference>
<dbReference type="SUPFAM" id="SSF53223">
    <property type="entry name" value="Aminoacid dehydrogenase-like, N-terminal domain"/>
    <property type="match status" value="1"/>
</dbReference>
<dbReference type="SUPFAM" id="SSF51735">
    <property type="entry name" value="NAD(P)-binding Rossmann-fold domains"/>
    <property type="match status" value="1"/>
</dbReference>
<name>FOLD_MYCFO</name>
<protein>
    <recommendedName>
        <fullName evidence="1">Bifunctional protein FolD</fullName>
    </recommendedName>
    <domain>
        <recommendedName>
            <fullName evidence="1">Methylenetetrahydrofolate dehydrogenase</fullName>
            <ecNumber evidence="1">1.5.1.5</ecNumber>
        </recommendedName>
    </domain>
    <domain>
        <recommendedName>
            <fullName evidence="1">Methenyltetrahydrofolate cyclohydrolase</fullName>
            <ecNumber evidence="1">3.5.4.9</ecNumber>
        </recommendedName>
    </domain>
</protein>
<feature type="chain" id="PRO_0000268400" description="Bifunctional protein FolD">
    <location>
        <begin position="1"/>
        <end position="286"/>
    </location>
</feature>
<feature type="binding site" evidence="1">
    <location>
        <begin position="168"/>
        <end position="170"/>
    </location>
    <ligand>
        <name>NADP(+)</name>
        <dbReference type="ChEBI" id="CHEBI:58349"/>
    </ligand>
</feature>
<feature type="binding site" evidence="1">
    <location>
        <position position="195"/>
    </location>
    <ligand>
        <name>NADP(+)</name>
        <dbReference type="ChEBI" id="CHEBI:58349"/>
    </ligand>
</feature>
<feature type="binding site" evidence="1">
    <location>
        <position position="236"/>
    </location>
    <ligand>
        <name>NADP(+)</name>
        <dbReference type="ChEBI" id="CHEBI:58349"/>
    </ligand>
</feature>